<comment type="function">
    <text evidence="1">GPI-anchored chitinase involved in the degradation of chitin, a component of the cell walls of fungi and exoskeletal elements of some animals (including worms and arthropods). Required to reshape the cell wall at the sites where cell wall remodeling and/or cell wall maturation actively take place such as sites of conidia formation (By similarity).</text>
</comment>
<comment type="catalytic activity">
    <reaction>
        <text>Random endo-hydrolysis of N-acetyl-beta-D-glucosaminide (1-&gt;4)-beta-linkages in chitin and chitodextrins.</text>
        <dbReference type="EC" id="3.2.1.14"/>
    </reaction>
</comment>
<comment type="subcellular location">
    <subcellularLocation>
        <location evidence="1">Cell membrane</location>
        <topology evidence="1">Lipid-anchor</topology>
        <topology evidence="1">GPI-anchor</topology>
    </subcellularLocation>
    <subcellularLocation>
        <location evidence="1">Secreted</location>
        <location evidence="1">Cell wall</location>
    </subcellularLocation>
    <subcellularLocation>
        <location evidence="1">Cell tip</location>
    </subcellularLocation>
    <text evidence="1">Localizes at the germ tubes of conidia, at hyphal branching sites and hyphal tips.</text>
</comment>
<comment type="developmental stage">
    <text evidence="5">Expression decreases during stationary and autolytic stages.</text>
</comment>
<comment type="induction">
    <text evidence="5 6">Expression is induced during conidiospore formation (PubMed:9501518). Significantly up-regulated expression with colloidal chitin and chito-oligomers, namely N-acetyl-D-glucosamine (GlcNAc), N,N'-diacetylchitobiose (GlcNAc)2 and N,N',N''-triacetylchitotriose (GlcNAc)3. Expression is not affected by changes in the levels of reactive oxygen species or in the glutathione-glutathione disulfide redox balance, the changes which are physiological characteristics developing in aging and autolyzing fungal cultures. Down-regulated by the oxidative-stress-generating agent diamide, but not by menadione or hydrogen peroxide (PubMed:17455791).</text>
</comment>
<comment type="PTM">
    <text evidence="1">O-glycosylated but not N-glycosylated.</text>
</comment>
<comment type="disruption phenotype">
    <text evidence="6">Decreases the frequency of germination.</text>
</comment>
<comment type="similarity">
    <text evidence="8">Belongs to the glycosyl hydrolase 18 family. Chitinase class III subfamily.</text>
</comment>
<protein>
    <recommendedName>
        <fullName>Endochitinase A</fullName>
        <ecNumber>3.2.1.14</ecNumber>
    </recommendedName>
    <alternativeName>
        <fullName>Chitinase A</fullName>
    </alternativeName>
</protein>
<evidence type="ECO:0000250" key="1"/>
<evidence type="ECO:0000255" key="2"/>
<evidence type="ECO:0000255" key="3">
    <source>
        <dbReference type="PROSITE-ProRule" id="PRU01258"/>
    </source>
</evidence>
<evidence type="ECO:0000256" key="4">
    <source>
        <dbReference type="SAM" id="MobiDB-lite"/>
    </source>
</evidence>
<evidence type="ECO:0000269" key="5">
    <source>
    </source>
</evidence>
<evidence type="ECO:0000269" key="6">
    <source>
    </source>
</evidence>
<evidence type="ECO:0000303" key="7">
    <source>
    </source>
</evidence>
<evidence type="ECO:0000305" key="8"/>
<feature type="signal peptide" evidence="2">
    <location>
        <begin position="1"/>
        <end position="21"/>
    </location>
</feature>
<feature type="chain" id="PRO_0000429820" description="Endochitinase A">
    <location>
        <begin position="22"/>
        <end position="936"/>
    </location>
</feature>
<feature type="propeptide" id="PRO_0000429821" description="Removed in mature form" evidence="1">
    <location>
        <begin position="937"/>
        <end position="961"/>
    </location>
</feature>
<feature type="domain" description="GH18" evidence="3">
    <location>
        <begin position="28"/>
        <end position="339"/>
    </location>
</feature>
<feature type="region of interest" description="Disordered" evidence="4">
    <location>
        <begin position="338"/>
        <end position="720"/>
    </location>
</feature>
<feature type="region of interest" description="Disordered" evidence="4">
    <location>
        <begin position="767"/>
        <end position="787"/>
    </location>
</feature>
<feature type="region of interest" description="Disordered" evidence="4">
    <location>
        <begin position="813"/>
        <end position="842"/>
    </location>
</feature>
<feature type="region of interest" description="Disordered" evidence="4">
    <location>
        <begin position="912"/>
        <end position="933"/>
    </location>
</feature>
<feature type="compositionally biased region" description="Pro residues" evidence="4">
    <location>
        <begin position="342"/>
        <end position="355"/>
    </location>
</feature>
<feature type="compositionally biased region" description="Low complexity" evidence="4">
    <location>
        <begin position="356"/>
        <end position="510"/>
    </location>
</feature>
<feature type="compositionally biased region" description="Low complexity" evidence="4">
    <location>
        <begin position="519"/>
        <end position="544"/>
    </location>
</feature>
<feature type="compositionally biased region" description="Low complexity" evidence="4">
    <location>
        <begin position="552"/>
        <end position="604"/>
    </location>
</feature>
<feature type="compositionally biased region" description="Low complexity" evidence="4">
    <location>
        <begin position="612"/>
        <end position="635"/>
    </location>
</feature>
<feature type="compositionally biased region" description="Polar residues" evidence="4">
    <location>
        <begin position="636"/>
        <end position="665"/>
    </location>
</feature>
<feature type="compositionally biased region" description="Low complexity" evidence="4">
    <location>
        <begin position="666"/>
        <end position="720"/>
    </location>
</feature>
<feature type="active site" description="Proton donor" evidence="3">
    <location>
        <position position="175"/>
    </location>
</feature>
<feature type="lipid moiety-binding region" description="GPI-anchor amidated glycine" evidence="1">
    <location>
        <position position="936"/>
    </location>
</feature>
<sequence>MAPKLFTFVSALSGLASLASAFHAEAKSNIAVYYGQGVNQPRLAEFCAETSYDIINIGFINSFPEQNPLTGLPGSDFGNQCWADTFVVDGIASQLYSHCPNIAEDIPKCQAAGKKVFLSLGGATPTYWFDTIDASTKLADFLWGAFGPVTDAWTVADKPRPFGNAVVDGFDFDIEFFGSKGYANMIKRFRRRFGEVPDQTFYISAAPQCSIPDEQLSVAIKNAVIDFVWVQFYNTPGCSARDFVLGTKNGFNYDSWVEVIKAGANPNAKLYVGLPASGAAANLGYYLTPEEVKPLVKKYMDKYPETFGGVMLWEATQARNNQIDGVGYNEKIREILYDLDPNHPPPTTSPTPTPTPSTTTTSTTSTTSTTSATSTTSTTSTTSTTSTTPTTSTTSTTSTTTPTPSPSPSTASSSTTETVTPSPKPSPSESSTTSETSSLPSTSTPVVSETPSETKTPTSSSAPPLSSSSPVGGSSSTASSSTSTPSETPSASSTRAVSETSTHISTSTSSGPETSLTGSSTSVPATSSSVPSSAISPSSTPVISETPRPPVTSSSSSTFVSSTSTSTDCSESSTAIGTHSSSSISETPSASTPAASPSTSPETTKTLTVFPTPGSSVSTGTTSASTLSSSVPATSGGHTETSTVSTSSANQTPSASTSKPLIPTNSASSTSTGSVTSTPSAPGVPSSSAGSDETATTSTTDSEPTSTSSGSVTAKPTTTEPATTTTIIVTSYTSICPTGFTTITTTITSTYCPGTASATATAIAPTTDVPGSGSGSSPAQPTITADIPEGWTTTVTVCTVCAATPTTVTLTLPPATTTEESTSAQPTGEVPSSDGSGSGEVSTTTVVVVPAPTGNAGDGVPAPGANVGEEYTAAPGSATTSKPLIGGGASGAHTAYPYASSTFHIIPSASAHVPVPSGSGSSPSGTQGGASPTFTGAGSRYDVVKGVPALVALALSLLAVL</sequence>
<keyword id="KW-0119">Carbohydrate metabolism</keyword>
<keyword id="KW-1003">Cell membrane</keyword>
<keyword id="KW-0134">Cell wall</keyword>
<keyword id="KW-0146">Chitin degradation</keyword>
<keyword id="KW-0147">Chitin-binding</keyword>
<keyword id="KW-0325">Glycoprotein</keyword>
<keyword id="KW-0326">Glycosidase</keyword>
<keyword id="KW-0336">GPI-anchor</keyword>
<keyword id="KW-0378">Hydrolase</keyword>
<keyword id="KW-0449">Lipoprotein</keyword>
<keyword id="KW-0472">Membrane</keyword>
<keyword id="KW-0624">Polysaccharide degradation</keyword>
<keyword id="KW-0964">Secreted</keyword>
<keyword id="KW-0732">Signal</keyword>
<dbReference type="EC" id="3.2.1.14"/>
<dbReference type="EMBL" id="D87895">
    <property type="protein sequence ID" value="BAA36223.1"/>
    <property type="molecule type" value="Genomic_DNA"/>
</dbReference>
<dbReference type="PIR" id="JW0067">
    <property type="entry name" value="JW0067"/>
</dbReference>
<dbReference type="SMR" id="Q92223"/>
<dbReference type="CAZy" id="GH18">
    <property type="family name" value="Glycoside Hydrolase Family 18"/>
</dbReference>
<dbReference type="OMA" id="NGPYIAM"/>
<dbReference type="BRENDA" id="3.2.1.14">
    <property type="organism ID" value="517"/>
</dbReference>
<dbReference type="GO" id="GO:0051286">
    <property type="term" value="C:cell tip"/>
    <property type="evidence" value="ECO:0007669"/>
    <property type="project" value="UniProtKB-SubCell"/>
</dbReference>
<dbReference type="GO" id="GO:0005576">
    <property type="term" value="C:extracellular region"/>
    <property type="evidence" value="ECO:0007669"/>
    <property type="project" value="UniProtKB-KW"/>
</dbReference>
<dbReference type="GO" id="GO:0005886">
    <property type="term" value="C:plasma membrane"/>
    <property type="evidence" value="ECO:0007669"/>
    <property type="project" value="UniProtKB-SubCell"/>
</dbReference>
<dbReference type="GO" id="GO:0098552">
    <property type="term" value="C:side of membrane"/>
    <property type="evidence" value="ECO:0007669"/>
    <property type="project" value="UniProtKB-KW"/>
</dbReference>
<dbReference type="GO" id="GO:0008061">
    <property type="term" value="F:chitin binding"/>
    <property type="evidence" value="ECO:0007669"/>
    <property type="project" value="UniProtKB-KW"/>
</dbReference>
<dbReference type="GO" id="GO:0008843">
    <property type="term" value="F:endochitinase activity"/>
    <property type="evidence" value="ECO:0007669"/>
    <property type="project" value="UniProtKB-EC"/>
</dbReference>
<dbReference type="GO" id="GO:0006032">
    <property type="term" value="P:chitin catabolic process"/>
    <property type="evidence" value="ECO:0007669"/>
    <property type="project" value="UniProtKB-KW"/>
</dbReference>
<dbReference type="GO" id="GO:0000272">
    <property type="term" value="P:polysaccharide catabolic process"/>
    <property type="evidence" value="ECO:0007669"/>
    <property type="project" value="UniProtKB-KW"/>
</dbReference>
<dbReference type="CDD" id="cd02877">
    <property type="entry name" value="GH18_hevamine_XipI_class_III"/>
    <property type="match status" value="1"/>
</dbReference>
<dbReference type="FunFam" id="3.20.20.80:FF:000150">
    <property type="entry name" value="Class III chitinase ChiA1"/>
    <property type="match status" value="1"/>
</dbReference>
<dbReference type="Gene3D" id="3.20.20.80">
    <property type="entry name" value="Glycosidases"/>
    <property type="match status" value="1"/>
</dbReference>
<dbReference type="InterPro" id="IPR045321">
    <property type="entry name" value="Cts1-like"/>
</dbReference>
<dbReference type="InterPro" id="IPR001223">
    <property type="entry name" value="Glyco_hydro18_cat"/>
</dbReference>
<dbReference type="InterPro" id="IPR001579">
    <property type="entry name" value="Glyco_hydro_18_chit_AS"/>
</dbReference>
<dbReference type="InterPro" id="IPR017853">
    <property type="entry name" value="Glycoside_hydrolase_SF"/>
</dbReference>
<dbReference type="InterPro" id="IPR050542">
    <property type="entry name" value="Glycosyl_Hydrlase18_Chitinase"/>
</dbReference>
<dbReference type="PANTHER" id="PTHR45708">
    <property type="entry name" value="ENDOCHITINASE"/>
    <property type="match status" value="1"/>
</dbReference>
<dbReference type="PANTHER" id="PTHR45708:SF47">
    <property type="entry name" value="ENDOCHITINASE A"/>
    <property type="match status" value="1"/>
</dbReference>
<dbReference type="Pfam" id="PF00704">
    <property type="entry name" value="Glyco_hydro_18"/>
    <property type="match status" value="1"/>
</dbReference>
<dbReference type="SUPFAM" id="SSF51445">
    <property type="entry name" value="(Trans)glycosidases"/>
    <property type="match status" value="1"/>
</dbReference>
<dbReference type="PROSITE" id="PS01095">
    <property type="entry name" value="GH18_1"/>
    <property type="match status" value="1"/>
</dbReference>
<dbReference type="PROSITE" id="PS51910">
    <property type="entry name" value="GH18_2"/>
    <property type="match status" value="1"/>
</dbReference>
<organism>
    <name type="scientific">Emericella nidulans</name>
    <name type="common">Aspergillus nidulans</name>
    <dbReference type="NCBI Taxonomy" id="162425"/>
    <lineage>
        <taxon>Eukaryota</taxon>
        <taxon>Fungi</taxon>
        <taxon>Dikarya</taxon>
        <taxon>Ascomycota</taxon>
        <taxon>Pezizomycotina</taxon>
        <taxon>Eurotiomycetes</taxon>
        <taxon>Eurotiomycetidae</taxon>
        <taxon>Eurotiales</taxon>
        <taxon>Aspergillaceae</taxon>
        <taxon>Aspergillus</taxon>
        <taxon>Aspergillus subgen. Nidulantes</taxon>
    </lineage>
</organism>
<name>CHIA1_EMEND</name>
<proteinExistence type="evidence at transcript level"/>
<gene>
    <name type="primary">chiA</name>
</gene>
<accession>Q92223</accession>
<accession>Q5ATY9</accession>
<reference key="1">
    <citation type="journal article" date="1998" name="Biosci. Biotechnol. Biochem.">
        <title>Cloning and characterization of a chitinase-encoding gene (chiA) from Aspergillus nidulans, disruption of which decreases germination frequency and hyphal growth.</title>
        <authorList>
            <person name="Takaya N."/>
            <person name="Yamazaki D."/>
            <person name="Horiuchi H."/>
            <person name="Ohta A."/>
            <person name="Takagi M."/>
        </authorList>
    </citation>
    <scope>NUCLEOTIDE SEQUENCE [GENOMIC DNA]</scope>
    <scope>INDUCTION</scope>
    <scope>DISRUPTION PHENOTYPE</scope>
    <source>
        <strain>FGSC 89</strain>
    </source>
</reference>
<reference key="2">
    <citation type="journal article" date="2006" name="Folia Microbiol. (Praha)">
        <title>Comparative studies of differential expression of chitinolytic enzymes encoded by chiA, chiB, chiC and nagA genes in Aspergillus nidulans.</title>
        <authorList>
            <person name="Pusztahelyi T."/>
            <person name="Molnar Z."/>
            <person name="Emri T."/>
            <person name="Klement E."/>
            <person name="Miskei M."/>
            <person name="Kerekgyarto J."/>
            <person name="Balla J."/>
            <person name="Pocsi I."/>
        </authorList>
    </citation>
    <scope>DEVELOPMENTAL STAGE</scope>
    <scope>INDUCTION</scope>
    <source>
        <strain evidence="7">FGSC 26</strain>
    </source>
</reference>